<evidence type="ECO:0000255" key="1">
    <source>
        <dbReference type="HAMAP-Rule" id="MF_00146"/>
    </source>
</evidence>
<feature type="chain" id="PRO_1000096411" description="dCTP deaminase">
    <location>
        <begin position="1"/>
        <end position="189"/>
    </location>
</feature>
<feature type="active site" description="Proton donor/acceptor" evidence="1">
    <location>
        <position position="138"/>
    </location>
</feature>
<feature type="binding site" evidence="1">
    <location>
        <begin position="112"/>
        <end position="117"/>
    </location>
    <ligand>
        <name>dCTP</name>
        <dbReference type="ChEBI" id="CHEBI:61481"/>
    </ligand>
</feature>
<feature type="binding site" evidence="1">
    <location>
        <begin position="136"/>
        <end position="138"/>
    </location>
    <ligand>
        <name>dCTP</name>
        <dbReference type="ChEBI" id="CHEBI:61481"/>
    </ligand>
</feature>
<feature type="binding site" evidence="1">
    <location>
        <position position="157"/>
    </location>
    <ligand>
        <name>dCTP</name>
        <dbReference type="ChEBI" id="CHEBI:61481"/>
    </ligand>
</feature>
<feature type="binding site" evidence="1">
    <location>
        <position position="171"/>
    </location>
    <ligand>
        <name>dCTP</name>
        <dbReference type="ChEBI" id="CHEBI:61481"/>
    </ligand>
</feature>
<feature type="binding site" evidence="1">
    <location>
        <position position="181"/>
    </location>
    <ligand>
        <name>dCTP</name>
        <dbReference type="ChEBI" id="CHEBI:61481"/>
    </ligand>
</feature>
<gene>
    <name evidence="1" type="primary">dcd</name>
    <name type="ordered locus">Bmul_0861</name>
    <name type="ordered locus">BMULJ_02397</name>
</gene>
<dbReference type="EC" id="3.5.4.13" evidence="1"/>
<dbReference type="EMBL" id="CP000868">
    <property type="protein sequence ID" value="ABX14555.1"/>
    <property type="molecule type" value="Genomic_DNA"/>
</dbReference>
<dbReference type="EMBL" id="AP009385">
    <property type="protein sequence ID" value="BAG44291.1"/>
    <property type="molecule type" value="Genomic_DNA"/>
</dbReference>
<dbReference type="RefSeq" id="WP_006398615.1">
    <property type="nucleotide sequence ID" value="NC_010804.1"/>
</dbReference>
<dbReference type="SMR" id="A9AHK2"/>
<dbReference type="STRING" id="395019.BMULJ_02397"/>
<dbReference type="GeneID" id="98107731"/>
<dbReference type="KEGG" id="bmj:BMULJ_02397"/>
<dbReference type="KEGG" id="bmu:Bmul_0861"/>
<dbReference type="eggNOG" id="COG0717">
    <property type="taxonomic scope" value="Bacteria"/>
</dbReference>
<dbReference type="HOGENOM" id="CLU_087476_4_0_4"/>
<dbReference type="UniPathway" id="UPA00610">
    <property type="reaction ID" value="UER00665"/>
</dbReference>
<dbReference type="Proteomes" id="UP000008815">
    <property type="component" value="Chromosome 1"/>
</dbReference>
<dbReference type="GO" id="GO:0008829">
    <property type="term" value="F:dCTP deaminase activity"/>
    <property type="evidence" value="ECO:0007669"/>
    <property type="project" value="UniProtKB-UniRule"/>
</dbReference>
<dbReference type="GO" id="GO:0000166">
    <property type="term" value="F:nucleotide binding"/>
    <property type="evidence" value="ECO:0007669"/>
    <property type="project" value="UniProtKB-KW"/>
</dbReference>
<dbReference type="GO" id="GO:0006226">
    <property type="term" value="P:dUMP biosynthetic process"/>
    <property type="evidence" value="ECO:0007669"/>
    <property type="project" value="UniProtKB-UniPathway"/>
</dbReference>
<dbReference type="GO" id="GO:0006229">
    <property type="term" value="P:dUTP biosynthetic process"/>
    <property type="evidence" value="ECO:0007669"/>
    <property type="project" value="UniProtKB-UniRule"/>
</dbReference>
<dbReference type="GO" id="GO:0015949">
    <property type="term" value="P:nucleobase-containing small molecule interconversion"/>
    <property type="evidence" value="ECO:0007669"/>
    <property type="project" value="TreeGrafter"/>
</dbReference>
<dbReference type="CDD" id="cd07557">
    <property type="entry name" value="trimeric_dUTPase"/>
    <property type="match status" value="1"/>
</dbReference>
<dbReference type="FunFam" id="2.70.40.10:FF:000001">
    <property type="entry name" value="dCTP deaminase"/>
    <property type="match status" value="1"/>
</dbReference>
<dbReference type="Gene3D" id="2.70.40.10">
    <property type="match status" value="1"/>
</dbReference>
<dbReference type="HAMAP" id="MF_00146">
    <property type="entry name" value="dCTP_deaminase"/>
    <property type="match status" value="1"/>
</dbReference>
<dbReference type="InterPro" id="IPR011962">
    <property type="entry name" value="dCTP_deaminase"/>
</dbReference>
<dbReference type="InterPro" id="IPR036157">
    <property type="entry name" value="dUTPase-like_sf"/>
</dbReference>
<dbReference type="InterPro" id="IPR033704">
    <property type="entry name" value="dUTPase_trimeric"/>
</dbReference>
<dbReference type="NCBIfam" id="TIGR02274">
    <property type="entry name" value="dCTP_deam"/>
    <property type="match status" value="1"/>
</dbReference>
<dbReference type="PANTHER" id="PTHR42680">
    <property type="entry name" value="DCTP DEAMINASE"/>
    <property type="match status" value="1"/>
</dbReference>
<dbReference type="PANTHER" id="PTHR42680:SF3">
    <property type="entry name" value="DCTP DEAMINASE"/>
    <property type="match status" value="1"/>
</dbReference>
<dbReference type="Pfam" id="PF22769">
    <property type="entry name" value="DCD"/>
    <property type="match status" value="1"/>
</dbReference>
<dbReference type="SUPFAM" id="SSF51283">
    <property type="entry name" value="dUTPase-like"/>
    <property type="match status" value="1"/>
</dbReference>
<name>DCD_BURM1</name>
<accession>A9AHK2</accession>
<keyword id="KW-0378">Hydrolase</keyword>
<keyword id="KW-0546">Nucleotide metabolism</keyword>
<keyword id="KW-0547">Nucleotide-binding</keyword>
<keyword id="KW-1185">Reference proteome</keyword>
<proteinExistence type="inferred from homology"/>
<sequence>MSIKSDKWIRRMAEEHKMIEPFVPDQVRASEDGRRIVSYGTSSYGYDIRCADEFKIFTNINSTIVDPKNFDEGSFVDFKGDVCIIPPNSFALARTVEYFRIPRTVLTVCLGKSTYARCGIIVNVTPFEPEWEGYVTLEFSNTTPLPAKIYANEGVAQVLFFESDEVCDVSYADRGGKYQGQRGVTLPKT</sequence>
<reference key="1">
    <citation type="submission" date="2007-10" db="EMBL/GenBank/DDBJ databases">
        <title>Complete sequence of chromosome 1 of Burkholderia multivorans ATCC 17616.</title>
        <authorList>
            <person name="Copeland A."/>
            <person name="Lucas S."/>
            <person name="Lapidus A."/>
            <person name="Barry K."/>
            <person name="Glavina del Rio T."/>
            <person name="Dalin E."/>
            <person name="Tice H."/>
            <person name="Pitluck S."/>
            <person name="Chain P."/>
            <person name="Malfatti S."/>
            <person name="Shin M."/>
            <person name="Vergez L."/>
            <person name="Schmutz J."/>
            <person name="Larimer F."/>
            <person name="Land M."/>
            <person name="Hauser L."/>
            <person name="Kyrpides N."/>
            <person name="Kim E."/>
            <person name="Tiedje J."/>
            <person name="Richardson P."/>
        </authorList>
    </citation>
    <scope>NUCLEOTIDE SEQUENCE [LARGE SCALE GENOMIC DNA]</scope>
    <source>
        <strain>ATCC 17616 / 249</strain>
    </source>
</reference>
<reference key="2">
    <citation type="submission" date="2007-04" db="EMBL/GenBank/DDBJ databases">
        <title>Complete genome sequence of Burkholderia multivorans ATCC 17616.</title>
        <authorList>
            <person name="Ohtsubo Y."/>
            <person name="Yamashita A."/>
            <person name="Kurokawa K."/>
            <person name="Takami H."/>
            <person name="Yuhara S."/>
            <person name="Nishiyama E."/>
            <person name="Endo R."/>
            <person name="Miyazaki R."/>
            <person name="Ono A."/>
            <person name="Yano K."/>
            <person name="Ito M."/>
            <person name="Sota M."/>
            <person name="Yuji N."/>
            <person name="Hattori M."/>
            <person name="Tsuda M."/>
        </authorList>
    </citation>
    <scope>NUCLEOTIDE SEQUENCE [LARGE SCALE GENOMIC DNA]</scope>
    <source>
        <strain>ATCC 17616 / 249</strain>
    </source>
</reference>
<comment type="function">
    <text evidence="1">Catalyzes the deamination of dCTP to dUTP.</text>
</comment>
<comment type="catalytic activity">
    <reaction evidence="1">
        <text>dCTP + H2O + H(+) = dUTP + NH4(+)</text>
        <dbReference type="Rhea" id="RHEA:22680"/>
        <dbReference type="ChEBI" id="CHEBI:15377"/>
        <dbReference type="ChEBI" id="CHEBI:15378"/>
        <dbReference type="ChEBI" id="CHEBI:28938"/>
        <dbReference type="ChEBI" id="CHEBI:61481"/>
        <dbReference type="ChEBI" id="CHEBI:61555"/>
        <dbReference type="EC" id="3.5.4.13"/>
    </reaction>
</comment>
<comment type="pathway">
    <text evidence="1">Pyrimidine metabolism; dUMP biosynthesis; dUMP from dCTP (dUTP route): step 1/2.</text>
</comment>
<comment type="subunit">
    <text evidence="1">Homotrimer.</text>
</comment>
<comment type="similarity">
    <text evidence="1">Belongs to the dCTP deaminase family.</text>
</comment>
<organism>
    <name type="scientific">Burkholderia multivorans (strain ATCC 17616 / 249)</name>
    <dbReference type="NCBI Taxonomy" id="395019"/>
    <lineage>
        <taxon>Bacteria</taxon>
        <taxon>Pseudomonadati</taxon>
        <taxon>Pseudomonadota</taxon>
        <taxon>Betaproteobacteria</taxon>
        <taxon>Burkholderiales</taxon>
        <taxon>Burkholderiaceae</taxon>
        <taxon>Burkholderia</taxon>
        <taxon>Burkholderia cepacia complex</taxon>
    </lineage>
</organism>
<protein>
    <recommendedName>
        <fullName evidence="1">dCTP deaminase</fullName>
        <ecNumber evidence="1">3.5.4.13</ecNumber>
    </recommendedName>
    <alternativeName>
        <fullName evidence="1">Deoxycytidine triphosphate deaminase</fullName>
    </alternativeName>
</protein>